<comment type="function">
    <text evidence="1">Nucleotidase that shows phosphatase activity on nucleoside 5'-monophosphates.</text>
</comment>
<comment type="catalytic activity">
    <reaction evidence="1">
        <text>a ribonucleoside 5'-phosphate + H2O = a ribonucleoside + phosphate</text>
        <dbReference type="Rhea" id="RHEA:12484"/>
        <dbReference type="ChEBI" id="CHEBI:15377"/>
        <dbReference type="ChEBI" id="CHEBI:18254"/>
        <dbReference type="ChEBI" id="CHEBI:43474"/>
        <dbReference type="ChEBI" id="CHEBI:58043"/>
        <dbReference type="EC" id="3.1.3.5"/>
    </reaction>
</comment>
<comment type="cofactor">
    <cofactor evidence="1">
        <name>a divalent metal cation</name>
        <dbReference type="ChEBI" id="CHEBI:60240"/>
    </cofactor>
    <text evidence="1">Binds 1 divalent metal cation per subunit.</text>
</comment>
<comment type="subcellular location">
    <subcellularLocation>
        <location evidence="1">Cytoplasm</location>
    </subcellularLocation>
</comment>
<comment type="similarity">
    <text evidence="1">Belongs to the SurE nucleotidase family.</text>
</comment>
<protein>
    <recommendedName>
        <fullName evidence="1">5'-nucleotidase SurE</fullName>
        <ecNumber evidence="1">3.1.3.5</ecNumber>
    </recommendedName>
    <alternativeName>
        <fullName evidence="1">Nucleoside 5'-monophosphate phosphohydrolase</fullName>
    </alternativeName>
</protein>
<evidence type="ECO:0000255" key="1">
    <source>
        <dbReference type="HAMAP-Rule" id="MF_00060"/>
    </source>
</evidence>
<reference key="1">
    <citation type="submission" date="2008-01" db="EMBL/GenBank/DDBJ databases">
        <title>Complete sequence of Shewanella halifaxensis HAW-EB4.</title>
        <authorList>
            <consortium name="US DOE Joint Genome Institute"/>
            <person name="Copeland A."/>
            <person name="Lucas S."/>
            <person name="Lapidus A."/>
            <person name="Glavina del Rio T."/>
            <person name="Dalin E."/>
            <person name="Tice H."/>
            <person name="Bruce D."/>
            <person name="Goodwin L."/>
            <person name="Pitluck S."/>
            <person name="Sims D."/>
            <person name="Brettin T."/>
            <person name="Detter J.C."/>
            <person name="Han C."/>
            <person name="Kuske C.R."/>
            <person name="Schmutz J."/>
            <person name="Larimer F."/>
            <person name="Land M."/>
            <person name="Hauser L."/>
            <person name="Kyrpides N."/>
            <person name="Kim E."/>
            <person name="Zhao J.-S."/>
            <person name="Richardson P."/>
        </authorList>
    </citation>
    <scope>NUCLEOTIDE SEQUENCE [LARGE SCALE GENOMIC DNA]</scope>
    <source>
        <strain>HAW-EB4</strain>
    </source>
</reference>
<organism>
    <name type="scientific">Shewanella halifaxensis (strain HAW-EB4)</name>
    <dbReference type="NCBI Taxonomy" id="458817"/>
    <lineage>
        <taxon>Bacteria</taxon>
        <taxon>Pseudomonadati</taxon>
        <taxon>Pseudomonadota</taxon>
        <taxon>Gammaproteobacteria</taxon>
        <taxon>Alteromonadales</taxon>
        <taxon>Shewanellaceae</taxon>
        <taxon>Shewanella</taxon>
    </lineage>
</organism>
<gene>
    <name evidence="1" type="primary">surE</name>
    <name type="ordered locus">Shal_1227</name>
</gene>
<feature type="chain" id="PRO_1000075040" description="5'-nucleotidase SurE">
    <location>
        <begin position="1"/>
        <end position="250"/>
    </location>
</feature>
<feature type="binding site" evidence="1">
    <location>
        <position position="8"/>
    </location>
    <ligand>
        <name>a divalent metal cation</name>
        <dbReference type="ChEBI" id="CHEBI:60240"/>
    </ligand>
</feature>
<feature type="binding site" evidence="1">
    <location>
        <position position="9"/>
    </location>
    <ligand>
        <name>a divalent metal cation</name>
        <dbReference type="ChEBI" id="CHEBI:60240"/>
    </ligand>
</feature>
<feature type="binding site" evidence="1">
    <location>
        <position position="39"/>
    </location>
    <ligand>
        <name>a divalent metal cation</name>
        <dbReference type="ChEBI" id="CHEBI:60240"/>
    </ligand>
</feature>
<feature type="binding site" evidence="1">
    <location>
        <position position="91"/>
    </location>
    <ligand>
        <name>a divalent metal cation</name>
        <dbReference type="ChEBI" id="CHEBI:60240"/>
    </ligand>
</feature>
<keyword id="KW-0963">Cytoplasm</keyword>
<keyword id="KW-0378">Hydrolase</keyword>
<keyword id="KW-0479">Metal-binding</keyword>
<keyword id="KW-0547">Nucleotide-binding</keyword>
<sequence>MKILISNDDGVNAEGIAALTTALNQIAETLTVGPDRNCSGASNSLTLTNPLRLNTLDNGFISVSGTPTDCVHLAIRELYQDEPDMVVSGINAGANMGDDTLYSGTVAAAMEGRFLGFPAIAISLVGHELKHYDTAAHYALKIVKALQDSPIAQDKILNINVPDLPLAEVKGIKITRLGARHRAEGMVRTQDPAGREIFWLGPPGDEQDASDGTDFYAVANGYVSITPLTVDLTAFEQLSALESWLTQIHD</sequence>
<accession>B0TK09</accession>
<name>SURE_SHEHH</name>
<dbReference type="EC" id="3.1.3.5" evidence="1"/>
<dbReference type="EMBL" id="CP000931">
    <property type="protein sequence ID" value="ABZ75796.1"/>
    <property type="molecule type" value="Genomic_DNA"/>
</dbReference>
<dbReference type="RefSeq" id="WP_012276338.1">
    <property type="nucleotide sequence ID" value="NC_010334.1"/>
</dbReference>
<dbReference type="SMR" id="B0TK09"/>
<dbReference type="STRING" id="458817.Shal_1227"/>
<dbReference type="KEGG" id="shl:Shal_1227"/>
<dbReference type="eggNOG" id="COG0496">
    <property type="taxonomic scope" value="Bacteria"/>
</dbReference>
<dbReference type="HOGENOM" id="CLU_045192_1_2_6"/>
<dbReference type="OrthoDB" id="9780815at2"/>
<dbReference type="Proteomes" id="UP000001317">
    <property type="component" value="Chromosome"/>
</dbReference>
<dbReference type="GO" id="GO:0005737">
    <property type="term" value="C:cytoplasm"/>
    <property type="evidence" value="ECO:0007669"/>
    <property type="project" value="UniProtKB-SubCell"/>
</dbReference>
<dbReference type="GO" id="GO:0008254">
    <property type="term" value="F:3'-nucleotidase activity"/>
    <property type="evidence" value="ECO:0007669"/>
    <property type="project" value="TreeGrafter"/>
</dbReference>
<dbReference type="GO" id="GO:0008253">
    <property type="term" value="F:5'-nucleotidase activity"/>
    <property type="evidence" value="ECO:0007669"/>
    <property type="project" value="UniProtKB-UniRule"/>
</dbReference>
<dbReference type="GO" id="GO:0004309">
    <property type="term" value="F:exopolyphosphatase activity"/>
    <property type="evidence" value="ECO:0007669"/>
    <property type="project" value="TreeGrafter"/>
</dbReference>
<dbReference type="GO" id="GO:0046872">
    <property type="term" value="F:metal ion binding"/>
    <property type="evidence" value="ECO:0007669"/>
    <property type="project" value="UniProtKB-UniRule"/>
</dbReference>
<dbReference type="GO" id="GO:0000166">
    <property type="term" value="F:nucleotide binding"/>
    <property type="evidence" value="ECO:0007669"/>
    <property type="project" value="UniProtKB-KW"/>
</dbReference>
<dbReference type="FunFam" id="3.40.1210.10:FF:000001">
    <property type="entry name" value="5'/3'-nucleotidase SurE"/>
    <property type="match status" value="1"/>
</dbReference>
<dbReference type="Gene3D" id="3.40.1210.10">
    <property type="entry name" value="Survival protein SurE-like phosphatase/nucleotidase"/>
    <property type="match status" value="1"/>
</dbReference>
<dbReference type="HAMAP" id="MF_00060">
    <property type="entry name" value="SurE"/>
    <property type="match status" value="1"/>
</dbReference>
<dbReference type="InterPro" id="IPR030048">
    <property type="entry name" value="SurE"/>
</dbReference>
<dbReference type="InterPro" id="IPR002828">
    <property type="entry name" value="SurE-like_Pase/nucleotidase"/>
</dbReference>
<dbReference type="InterPro" id="IPR036523">
    <property type="entry name" value="SurE-like_sf"/>
</dbReference>
<dbReference type="NCBIfam" id="NF001489">
    <property type="entry name" value="PRK00346.1-3"/>
    <property type="match status" value="1"/>
</dbReference>
<dbReference type="NCBIfam" id="NF001490">
    <property type="entry name" value="PRK00346.1-4"/>
    <property type="match status" value="1"/>
</dbReference>
<dbReference type="NCBIfam" id="TIGR00087">
    <property type="entry name" value="surE"/>
    <property type="match status" value="1"/>
</dbReference>
<dbReference type="PANTHER" id="PTHR30457">
    <property type="entry name" value="5'-NUCLEOTIDASE SURE"/>
    <property type="match status" value="1"/>
</dbReference>
<dbReference type="PANTHER" id="PTHR30457:SF12">
    <property type="entry name" value="5'_3'-NUCLEOTIDASE SURE"/>
    <property type="match status" value="1"/>
</dbReference>
<dbReference type="Pfam" id="PF01975">
    <property type="entry name" value="SurE"/>
    <property type="match status" value="1"/>
</dbReference>
<dbReference type="SUPFAM" id="SSF64167">
    <property type="entry name" value="SurE-like"/>
    <property type="match status" value="1"/>
</dbReference>
<proteinExistence type="inferred from homology"/>